<dbReference type="EC" id="1.14.14.1"/>
<dbReference type="EMBL" id="U14161">
    <property type="protein sequence ID" value="AAA74968.1"/>
    <property type="molecule type" value="mRNA"/>
</dbReference>
<dbReference type="PIR" id="S55317">
    <property type="entry name" value="S55317"/>
</dbReference>
<dbReference type="SMR" id="Q92095"/>
<dbReference type="GO" id="GO:0005789">
    <property type="term" value="C:endoplasmic reticulum membrane"/>
    <property type="evidence" value="ECO:0007669"/>
    <property type="project" value="UniProtKB-SubCell"/>
</dbReference>
<dbReference type="GO" id="GO:0020037">
    <property type="term" value="F:heme binding"/>
    <property type="evidence" value="ECO:0007669"/>
    <property type="project" value="InterPro"/>
</dbReference>
<dbReference type="GO" id="GO:0005506">
    <property type="term" value="F:iron ion binding"/>
    <property type="evidence" value="ECO:0007669"/>
    <property type="project" value="InterPro"/>
</dbReference>
<dbReference type="GO" id="GO:0004508">
    <property type="term" value="F:steroid 17-alpha-monooxygenase activity"/>
    <property type="evidence" value="ECO:0007669"/>
    <property type="project" value="TreeGrafter"/>
</dbReference>
<dbReference type="GO" id="GO:0042446">
    <property type="term" value="P:hormone biosynthetic process"/>
    <property type="evidence" value="ECO:0007669"/>
    <property type="project" value="TreeGrafter"/>
</dbReference>
<dbReference type="GO" id="GO:0042448">
    <property type="term" value="P:progesterone metabolic process"/>
    <property type="evidence" value="ECO:0007669"/>
    <property type="project" value="TreeGrafter"/>
</dbReference>
<dbReference type="CDD" id="cd20676">
    <property type="entry name" value="CYP1A"/>
    <property type="match status" value="1"/>
</dbReference>
<dbReference type="FunFam" id="1.10.630.10:FF:000002">
    <property type="entry name" value="Cytochrome P450 1A1"/>
    <property type="match status" value="1"/>
</dbReference>
<dbReference type="Gene3D" id="1.10.630.10">
    <property type="entry name" value="Cytochrome P450"/>
    <property type="match status" value="1"/>
</dbReference>
<dbReference type="InterPro" id="IPR001128">
    <property type="entry name" value="Cyt_P450"/>
</dbReference>
<dbReference type="InterPro" id="IPR017972">
    <property type="entry name" value="Cyt_P450_CS"/>
</dbReference>
<dbReference type="InterPro" id="IPR002401">
    <property type="entry name" value="Cyt_P450_E_grp-I"/>
</dbReference>
<dbReference type="InterPro" id="IPR008066">
    <property type="entry name" value="Cyt_P450_E_grp-I_CYP1"/>
</dbReference>
<dbReference type="InterPro" id="IPR036396">
    <property type="entry name" value="Cyt_P450_sf"/>
</dbReference>
<dbReference type="PANTHER" id="PTHR24289:SF21">
    <property type="entry name" value="CYTOCHROME P450 1A"/>
    <property type="match status" value="1"/>
</dbReference>
<dbReference type="PANTHER" id="PTHR24289">
    <property type="entry name" value="STEROID 17-ALPHA-HYDROXYLASE/17,20 LYASE"/>
    <property type="match status" value="1"/>
</dbReference>
<dbReference type="Pfam" id="PF00067">
    <property type="entry name" value="p450"/>
    <property type="match status" value="1"/>
</dbReference>
<dbReference type="PRINTS" id="PR00463">
    <property type="entry name" value="EP450I"/>
</dbReference>
<dbReference type="PRINTS" id="PR01683">
    <property type="entry name" value="EP450ICYP1A"/>
</dbReference>
<dbReference type="PRINTS" id="PR00385">
    <property type="entry name" value="P450"/>
</dbReference>
<dbReference type="SUPFAM" id="SSF48264">
    <property type="entry name" value="Cytochrome P450"/>
    <property type="match status" value="1"/>
</dbReference>
<dbReference type="PROSITE" id="PS00086">
    <property type="entry name" value="CYTOCHROME_P450"/>
    <property type="match status" value="1"/>
</dbReference>
<gene>
    <name type="primary">cyp1a1</name>
</gene>
<organism>
    <name type="scientific">Opsanus tau</name>
    <name type="common">Oyster toadfish</name>
    <name type="synonym">Gadus tau</name>
    <dbReference type="NCBI Taxonomy" id="8068"/>
    <lineage>
        <taxon>Eukaryota</taxon>
        <taxon>Metazoa</taxon>
        <taxon>Chordata</taxon>
        <taxon>Craniata</taxon>
        <taxon>Vertebrata</taxon>
        <taxon>Euteleostomi</taxon>
        <taxon>Actinopterygii</taxon>
        <taxon>Neopterygii</taxon>
        <taxon>Teleostei</taxon>
        <taxon>Neoteleostei</taxon>
        <taxon>Acanthomorphata</taxon>
        <taxon>Batrachoidaria</taxon>
        <taxon>Batrachoididae</taxon>
        <taxon>Opsanus</taxon>
    </lineage>
</organism>
<keyword id="KW-0256">Endoplasmic reticulum</keyword>
<keyword id="KW-0349">Heme</keyword>
<keyword id="KW-0408">Iron</keyword>
<keyword id="KW-0472">Membrane</keyword>
<keyword id="KW-0479">Metal-binding</keyword>
<keyword id="KW-0492">Microsome</keyword>
<keyword id="KW-0503">Monooxygenase</keyword>
<keyword id="KW-0560">Oxidoreductase</keyword>
<protein>
    <recommendedName>
        <fullName>Cytochrome P450 1A1</fullName>
        <ecNumber>1.14.14.1</ecNumber>
    </recommendedName>
    <alternativeName>
        <fullName>CYPIA1</fullName>
    </alternativeName>
</protein>
<feature type="chain" id="PRO_0000051643" description="Cytochrome P450 1A1">
    <location>
        <begin position="1"/>
        <end position="521"/>
    </location>
</feature>
<feature type="binding site" evidence="1">
    <location>
        <position position="229"/>
    </location>
    <ligand>
        <name>substrate</name>
    </ligand>
</feature>
<feature type="binding site" description="axial binding residue" evidence="1">
    <location>
        <position position="463"/>
    </location>
    <ligand>
        <name>heme</name>
        <dbReference type="ChEBI" id="CHEBI:30413"/>
    </ligand>
    <ligandPart>
        <name>Fe</name>
        <dbReference type="ChEBI" id="CHEBI:18248"/>
    </ligandPart>
</feature>
<reference key="1">
    <citation type="journal article" date="1995" name="Biochem. J.">
        <title>Identification of cytochrome P-450 1A (CYP1A) genes from two teleost fish, toadfish (Opsanus tau) and scup (Stenotomus chrysops), and phylogenetic analysis of CYP1A genes.</title>
        <authorList>
            <person name="Morrison H.G."/>
            <person name="Oleksiak M.F."/>
            <person name="Cornell N.W."/>
            <person name="Sogin M.L."/>
            <person name="Stegeman J.J."/>
        </authorList>
    </citation>
    <scope>NUCLEOTIDE SEQUENCE [MRNA]</scope>
    <source>
        <tissue>Liver</tissue>
    </source>
</reference>
<evidence type="ECO:0000250" key="1"/>
<evidence type="ECO:0000305" key="2"/>
<sequence>MALIILPFIGSLSVSESLVALITICVVYLILTYSHTKIPAGLQRLPGPKPLPIIGNVLEIGRKPYQTLTALSKRYGPVFQIQIGMRPVVVLSGSETVRQALIKQGEDFSGRPDLYTFQFISDGKSLAFSTDKVGVWRARRKLAYSALRSFSSLESTNQEYSCMLEEHICKEGEYLVKQLNTSMKANGSFDPFRNIVVSVANVICGMCFGRRYDHYDQELVSLVNLSEEFGQVVGTGNLADFIPVLRFLPSTAMKKFLSINDRFDKFVKKIVSEHYATYNKDNIRDITDSLIDHCEDRKLDENCNVQVSDEKIVGIVNDLFGAGFDTVSTGLSWSVMYLVAYPEIQERLYQEIKDSVGTERMPLLSDRPSLPFLDAFILEIFRHSSFLPFTIPHCTTKNTSLNGYFIPKDTCVFINQWQINHDPELWKDPFSFNPERFLSADGTELNRLEGEKVMLFGLGKRRCIGEVIARNEVFLFLAIIIQRLQFHMLPGEPLDMTPEYGLTMKHKRCQLRATMREKNEQ</sequence>
<name>CP1A1_OPSTA</name>
<comment type="function">
    <text>Cytochromes P450 are a group of heme-thiolate monooxygenases. They oxidize a variety of structurally unrelated compounds, including steroids, fatty acids, and xenobiotics.</text>
</comment>
<comment type="catalytic activity">
    <reaction>
        <text>an organic molecule + reduced [NADPH--hemoprotein reductase] + O2 = an alcohol + oxidized [NADPH--hemoprotein reductase] + H2O + H(+)</text>
        <dbReference type="Rhea" id="RHEA:17149"/>
        <dbReference type="Rhea" id="RHEA-COMP:11964"/>
        <dbReference type="Rhea" id="RHEA-COMP:11965"/>
        <dbReference type="ChEBI" id="CHEBI:15377"/>
        <dbReference type="ChEBI" id="CHEBI:15378"/>
        <dbReference type="ChEBI" id="CHEBI:15379"/>
        <dbReference type="ChEBI" id="CHEBI:30879"/>
        <dbReference type="ChEBI" id="CHEBI:57618"/>
        <dbReference type="ChEBI" id="CHEBI:58210"/>
        <dbReference type="ChEBI" id="CHEBI:142491"/>
        <dbReference type="EC" id="1.14.14.1"/>
    </reaction>
</comment>
<comment type="cofactor">
    <cofactor evidence="1">
        <name>heme</name>
        <dbReference type="ChEBI" id="CHEBI:30413"/>
    </cofactor>
</comment>
<comment type="subcellular location">
    <subcellularLocation>
        <location>Endoplasmic reticulum membrane</location>
        <topology>Peripheral membrane protein</topology>
    </subcellularLocation>
    <subcellularLocation>
        <location>Microsome membrane</location>
        <topology>Peripheral membrane protein</topology>
    </subcellularLocation>
</comment>
<comment type="similarity">
    <text evidence="2">Belongs to the cytochrome P450 family.</text>
</comment>
<accession>Q92095</accession>
<proteinExistence type="evidence at transcript level"/>